<protein>
    <recommendedName>
        <fullName evidence="1">Uracil-DNA glycosylase</fullName>
        <shortName evidence="1">UDG</shortName>
        <ecNumber evidence="1">3.2.2.27</ecNumber>
    </recommendedName>
</protein>
<reference key="1">
    <citation type="journal article" date="2008" name="J. Bacteriol.">
        <title>The complete genome sequence of Actinobacillus pleuropneumoniae L20 (serotype 5b).</title>
        <authorList>
            <person name="Foote S.J."/>
            <person name="Bosse J.T."/>
            <person name="Bouevitch A.B."/>
            <person name="Langford P.R."/>
            <person name="Young N.M."/>
            <person name="Nash J.H.E."/>
        </authorList>
    </citation>
    <scope>NUCLEOTIDE SEQUENCE [LARGE SCALE GENOMIC DNA]</scope>
    <source>
        <strain>L20</strain>
    </source>
</reference>
<sequence>MNNWTEALGEEKQQPYFQHILQQVHQERMNGVTVFPPQKEVFSAFALTEFKDVKVVILGQDPYHGPNQAHGLAFSVKPPVAPPPSLVNMYKELAQDVEGFQIPNHGYLVDWAKQGVLLLNTVLTVRQGQAHSHANFGWEIFTDKVIAQLNQHRENLVFLLWGSHAQKKGQFIDRSRHCVLTAPHPSPLSAYRGFFGCKHFSKTNRYLLSKGIAPINWQLRLEIDY</sequence>
<dbReference type="EC" id="3.2.2.27" evidence="1"/>
<dbReference type="EMBL" id="CP000569">
    <property type="protein sequence ID" value="ABN73466.1"/>
    <property type="molecule type" value="Genomic_DNA"/>
</dbReference>
<dbReference type="SMR" id="A3MZ80"/>
<dbReference type="STRING" id="416269.APL_0362"/>
<dbReference type="EnsemblBacteria" id="ABN73466">
    <property type="protein sequence ID" value="ABN73466"/>
    <property type="gene ID" value="APL_0362"/>
</dbReference>
<dbReference type="KEGG" id="apl:APL_0362"/>
<dbReference type="eggNOG" id="COG0692">
    <property type="taxonomic scope" value="Bacteria"/>
</dbReference>
<dbReference type="HOGENOM" id="CLU_032162_3_0_6"/>
<dbReference type="Proteomes" id="UP000001432">
    <property type="component" value="Chromosome"/>
</dbReference>
<dbReference type="GO" id="GO:0005737">
    <property type="term" value="C:cytoplasm"/>
    <property type="evidence" value="ECO:0007669"/>
    <property type="project" value="UniProtKB-SubCell"/>
</dbReference>
<dbReference type="GO" id="GO:0004844">
    <property type="term" value="F:uracil DNA N-glycosylase activity"/>
    <property type="evidence" value="ECO:0007669"/>
    <property type="project" value="UniProtKB-UniRule"/>
</dbReference>
<dbReference type="GO" id="GO:0097510">
    <property type="term" value="P:base-excision repair, AP site formation via deaminated base removal"/>
    <property type="evidence" value="ECO:0007669"/>
    <property type="project" value="TreeGrafter"/>
</dbReference>
<dbReference type="CDD" id="cd10027">
    <property type="entry name" value="UDG-F1-like"/>
    <property type="match status" value="1"/>
</dbReference>
<dbReference type="FunFam" id="3.40.470.10:FF:000001">
    <property type="entry name" value="Uracil-DNA glycosylase"/>
    <property type="match status" value="1"/>
</dbReference>
<dbReference type="Gene3D" id="3.40.470.10">
    <property type="entry name" value="Uracil-DNA glycosylase-like domain"/>
    <property type="match status" value="1"/>
</dbReference>
<dbReference type="HAMAP" id="MF_00148">
    <property type="entry name" value="UDG"/>
    <property type="match status" value="1"/>
</dbReference>
<dbReference type="InterPro" id="IPR002043">
    <property type="entry name" value="UDG_fam1"/>
</dbReference>
<dbReference type="InterPro" id="IPR018085">
    <property type="entry name" value="Ura-DNA_Glyclase_AS"/>
</dbReference>
<dbReference type="InterPro" id="IPR005122">
    <property type="entry name" value="Uracil-DNA_glycosylase-like"/>
</dbReference>
<dbReference type="InterPro" id="IPR036895">
    <property type="entry name" value="Uracil-DNA_glycosylase-like_sf"/>
</dbReference>
<dbReference type="NCBIfam" id="NF003588">
    <property type="entry name" value="PRK05254.1-1"/>
    <property type="match status" value="1"/>
</dbReference>
<dbReference type="NCBIfam" id="NF003589">
    <property type="entry name" value="PRK05254.1-2"/>
    <property type="match status" value="1"/>
</dbReference>
<dbReference type="NCBIfam" id="NF003591">
    <property type="entry name" value="PRK05254.1-4"/>
    <property type="match status" value="1"/>
</dbReference>
<dbReference type="NCBIfam" id="NF003592">
    <property type="entry name" value="PRK05254.1-5"/>
    <property type="match status" value="1"/>
</dbReference>
<dbReference type="NCBIfam" id="TIGR00628">
    <property type="entry name" value="ung"/>
    <property type="match status" value="1"/>
</dbReference>
<dbReference type="PANTHER" id="PTHR11264">
    <property type="entry name" value="URACIL-DNA GLYCOSYLASE"/>
    <property type="match status" value="1"/>
</dbReference>
<dbReference type="PANTHER" id="PTHR11264:SF0">
    <property type="entry name" value="URACIL-DNA GLYCOSYLASE"/>
    <property type="match status" value="1"/>
</dbReference>
<dbReference type="Pfam" id="PF03167">
    <property type="entry name" value="UDG"/>
    <property type="match status" value="1"/>
</dbReference>
<dbReference type="SMART" id="SM00986">
    <property type="entry name" value="UDG"/>
    <property type="match status" value="1"/>
</dbReference>
<dbReference type="SMART" id="SM00987">
    <property type="entry name" value="UreE_C"/>
    <property type="match status" value="1"/>
</dbReference>
<dbReference type="SUPFAM" id="SSF52141">
    <property type="entry name" value="Uracil-DNA glycosylase-like"/>
    <property type="match status" value="1"/>
</dbReference>
<dbReference type="PROSITE" id="PS00130">
    <property type="entry name" value="U_DNA_GLYCOSYLASE"/>
    <property type="match status" value="1"/>
</dbReference>
<name>UNG_ACTP2</name>
<keyword id="KW-0963">Cytoplasm</keyword>
<keyword id="KW-0227">DNA damage</keyword>
<keyword id="KW-0234">DNA repair</keyword>
<keyword id="KW-0378">Hydrolase</keyword>
<keyword id="KW-1185">Reference proteome</keyword>
<organism>
    <name type="scientific">Actinobacillus pleuropneumoniae serotype 5b (strain L20)</name>
    <dbReference type="NCBI Taxonomy" id="416269"/>
    <lineage>
        <taxon>Bacteria</taxon>
        <taxon>Pseudomonadati</taxon>
        <taxon>Pseudomonadota</taxon>
        <taxon>Gammaproteobacteria</taxon>
        <taxon>Pasteurellales</taxon>
        <taxon>Pasteurellaceae</taxon>
        <taxon>Actinobacillus</taxon>
    </lineage>
</organism>
<gene>
    <name evidence="1" type="primary">ung</name>
    <name type="ordered locus">APL_0362</name>
</gene>
<accession>A3MZ80</accession>
<feature type="chain" id="PRO_1000009863" description="Uracil-DNA glycosylase">
    <location>
        <begin position="1"/>
        <end position="225"/>
    </location>
</feature>
<feature type="active site" description="Proton acceptor" evidence="1">
    <location>
        <position position="61"/>
    </location>
</feature>
<evidence type="ECO:0000255" key="1">
    <source>
        <dbReference type="HAMAP-Rule" id="MF_00148"/>
    </source>
</evidence>
<proteinExistence type="inferred from homology"/>
<comment type="function">
    <text evidence="1">Excises uracil residues from the DNA which can arise as a result of misincorporation of dUMP residues by DNA polymerase or due to deamination of cytosine.</text>
</comment>
<comment type="catalytic activity">
    <reaction evidence="1">
        <text>Hydrolyzes single-stranded DNA or mismatched double-stranded DNA and polynucleotides, releasing free uracil.</text>
        <dbReference type="EC" id="3.2.2.27"/>
    </reaction>
</comment>
<comment type="subcellular location">
    <subcellularLocation>
        <location evidence="1">Cytoplasm</location>
    </subcellularLocation>
</comment>
<comment type="similarity">
    <text evidence="1">Belongs to the uracil-DNA glycosylase (UDG) superfamily. UNG family.</text>
</comment>